<comment type="function">
    <text evidence="1">Possesses weak insulin-releasing activity.</text>
</comment>
<comment type="subcellular location">
    <subcellularLocation>
        <location evidence="1">Secreted</location>
    </subcellularLocation>
</comment>
<comment type="tissue specificity">
    <text evidence="1">Expressed by the skin glands.</text>
</comment>
<comment type="mass spectrometry">
    <text>The measured range is 1-?.</text>
</comment>
<name>IP2_AGASP</name>
<dbReference type="GO" id="GO:0005576">
    <property type="term" value="C:extracellular region"/>
    <property type="evidence" value="ECO:0007669"/>
    <property type="project" value="UniProtKB-SubCell"/>
</dbReference>
<keyword id="KW-0903">Direct protein sequencing</keyword>
<keyword id="KW-0964">Secreted</keyword>
<evidence type="ECO:0000269" key="1">
    <source>
    </source>
</evidence>
<evidence type="ECO:0000303" key="2">
    <source>
    </source>
</evidence>
<evidence type="ECO:0000305" key="3"/>
<proteinExistence type="evidence at protein level"/>
<feature type="peptide" id="PRO_0000412977" description="Insulinotropic peptide 2" evidence="1">
    <location>
        <begin position="1"/>
        <end position="12"/>
    </location>
</feature>
<feature type="non-terminal residue" evidence="2">
    <location>
        <position position="12"/>
    </location>
</feature>
<protein>
    <recommendedName>
        <fullName evidence="2">Insulinotropic peptide 2</fullName>
    </recommendedName>
</protein>
<accession>P86940</accession>
<sequence>MLADVFEKIMGD</sequence>
<organism>
    <name type="scientific">Agalychnis spurrelli</name>
    <name type="common">Gliding leaf frog</name>
    <name type="synonym">Agalychnis litodryas</name>
    <dbReference type="NCBI Taxonomy" id="317303"/>
    <lineage>
        <taxon>Eukaryota</taxon>
        <taxon>Metazoa</taxon>
        <taxon>Chordata</taxon>
        <taxon>Craniata</taxon>
        <taxon>Vertebrata</taxon>
        <taxon>Euteleostomi</taxon>
        <taxon>Amphibia</taxon>
        <taxon>Batrachia</taxon>
        <taxon>Anura</taxon>
        <taxon>Neobatrachia</taxon>
        <taxon>Hyloidea</taxon>
        <taxon>Hylidae</taxon>
        <taxon>Phyllomedusinae</taxon>
        <taxon>Agalychnis</taxon>
    </lineage>
</organism>
<reference evidence="3" key="1">
    <citation type="journal article" date="2004" name="Regul. Pept.">
        <title>Isolation and characterisation of an unexpected class of insulinotropic peptides in the skin of the frog Agalychnis litodryas.</title>
        <authorList>
            <person name="Marenah L."/>
            <person name="Shaw C."/>
            <person name="Orr D.F."/>
            <person name="McClean S."/>
            <person name="Flatt P.R."/>
            <person name="Abdel-Wahab Y.H."/>
        </authorList>
    </citation>
    <scope>PROTEIN SEQUENCE</scope>
    <scope>FUNCTION</scope>
    <scope>SUBCELLULAR LOCATION</scope>
    <scope>TISSUE SPECIFICITY</scope>
    <scope>MASS SPECTROMETRY</scope>
    <source>
        <tissue evidence="1">Skin secretion</tissue>
    </source>
</reference>